<gene>
    <name type="primary">Cox15</name>
</gene>
<keyword id="KW-0025">Alternative splicing</keyword>
<keyword id="KW-0350">Heme biosynthesis</keyword>
<keyword id="KW-0408">Iron</keyword>
<keyword id="KW-0472">Membrane</keyword>
<keyword id="KW-0479">Metal-binding</keyword>
<keyword id="KW-0496">Mitochondrion</keyword>
<keyword id="KW-0999">Mitochondrion inner membrane</keyword>
<keyword id="KW-0560">Oxidoreductase</keyword>
<keyword id="KW-1185">Reference proteome</keyword>
<keyword id="KW-0812">Transmembrane</keyword>
<keyword id="KW-1133">Transmembrane helix</keyword>
<accession>Q8BJ03</accession>
<accession>Q3URB2</accession>
<accession>Q8VDN0</accession>
<accession>Q921K5</accession>
<protein>
    <recommendedName>
        <fullName>Heme A synthase COX15</fullName>
        <shortName>HAS</shortName>
        <ecNumber evidence="2">1.17.99.9</ecNumber>
    </recommendedName>
    <alternativeName>
        <fullName>Cytochrome c oxidase assembly protein COX15 homolog</fullName>
    </alternativeName>
</protein>
<feature type="chain" id="PRO_0000183932" description="Heme A synthase COX15">
    <location>
        <begin position="1"/>
        <end position="413"/>
    </location>
</feature>
<feature type="topological domain" description="Mitochondrial matrix" evidence="2">
    <location>
        <begin position="1"/>
        <end position="71"/>
    </location>
</feature>
<feature type="transmembrane region" description="Helical" evidence="3">
    <location>
        <begin position="72"/>
        <end position="92"/>
    </location>
</feature>
<feature type="topological domain" description="Mitochondrial intermembrane" evidence="2">
    <location>
        <begin position="93"/>
        <end position="156"/>
    </location>
</feature>
<feature type="transmembrane region" description="Helical" evidence="3">
    <location>
        <begin position="157"/>
        <end position="174"/>
    </location>
</feature>
<feature type="topological domain" description="Mitochondrial matrix" evidence="2">
    <location>
        <begin position="175"/>
        <end position="186"/>
    </location>
</feature>
<feature type="transmembrane region" description="Helical" evidence="3">
    <location>
        <begin position="187"/>
        <end position="207"/>
    </location>
</feature>
<feature type="topological domain" description="Mitochondrial intermembrane" evidence="2">
    <location>
        <begin position="208"/>
        <end position="229"/>
    </location>
</feature>
<feature type="transmembrane region" description="Helical" evidence="3">
    <location>
        <begin position="230"/>
        <end position="250"/>
    </location>
</feature>
<feature type="topological domain" description="Mitochondrial matrix" evidence="2">
    <location>
        <begin position="251"/>
        <end position="271"/>
    </location>
</feature>
<feature type="transmembrane region" description="Helical" evidence="3">
    <location>
        <begin position="272"/>
        <end position="292"/>
    </location>
</feature>
<feature type="topological domain" description="Mitochondrial intermembrane" evidence="2">
    <location>
        <begin position="293"/>
        <end position="329"/>
    </location>
</feature>
<feature type="transmembrane region" description="Helical" evidence="3">
    <location>
        <begin position="330"/>
        <end position="347"/>
    </location>
</feature>
<feature type="topological domain" description="Mitochondrial matrix" evidence="2">
    <location>
        <begin position="348"/>
        <end position="359"/>
    </location>
</feature>
<feature type="transmembrane region" description="Helical" evidence="3">
    <location>
        <begin position="360"/>
        <end position="380"/>
    </location>
</feature>
<feature type="topological domain" description="Mitochondrial intermembrane" evidence="2">
    <location>
        <begin position="381"/>
        <end position="384"/>
    </location>
</feature>
<feature type="transmembrane region" description="Helical" evidence="3">
    <location>
        <begin position="385"/>
        <end position="405"/>
    </location>
</feature>
<feature type="topological domain" description="Mitochondrial matrix" evidence="2">
    <location>
        <begin position="406"/>
        <end position="413"/>
    </location>
</feature>
<feature type="binding site" description="axial binding residue" evidence="1">
    <location>
        <position position="155"/>
    </location>
    <ligand>
        <name>heme o</name>
        <dbReference type="ChEBI" id="CHEBI:24480"/>
    </ligand>
    <ligandPart>
        <name>Fe</name>
        <dbReference type="ChEBI" id="CHEBI:18248"/>
    </ligandPart>
</feature>
<feature type="binding site" description="axial binding residue" evidence="1">
    <location>
        <position position="229"/>
    </location>
    <ligand>
        <name>heme o</name>
        <dbReference type="ChEBI" id="CHEBI:24480"/>
    </ligand>
    <ligandPart>
        <name>Fe</name>
        <dbReference type="ChEBI" id="CHEBI:18248"/>
    </ligandPart>
</feature>
<feature type="binding site" description="axial binding residue" evidence="1">
    <location>
        <position position="329"/>
    </location>
    <ligand>
        <name>heme b</name>
        <dbReference type="ChEBI" id="CHEBI:60344"/>
    </ligand>
    <ligandPart>
        <name>Fe</name>
        <dbReference type="ChEBI" id="CHEBI:18248"/>
    </ligandPart>
</feature>
<feature type="binding site" description="axial binding residue" evidence="1">
    <location>
        <position position="390"/>
    </location>
    <ligand>
        <name>heme b</name>
        <dbReference type="ChEBI" id="CHEBI:60344"/>
    </ligand>
    <ligandPart>
        <name>Fe</name>
        <dbReference type="ChEBI" id="CHEBI:18248"/>
    </ligandPart>
</feature>
<feature type="splice variant" id="VSP_011282" description="In isoform 2." evidence="4">
    <original>QSGSLALLSGALWLMNELRRVPK</original>
    <variation>THTHTP</variation>
    <location>
        <begin position="391"/>
        <end position="413"/>
    </location>
</feature>
<comment type="function">
    <text evidence="2">Catalyzes the second reaction in the biosynthesis of heme A, a prosthetic group of mitochondrial cytochrome c oxidase (CcO). Heme A is synthesized from heme B by two sequential enzymatic reactions catalyzed by heme O synthase (HOS) and heme A synthase (HAS). HAS catalyzes the conversion of heme O to heme A by two successive hydroxylations of the methyl group at C8, in a reaction that involves matrix ferredoxin and ferredoxin reductase. The first hydroxylation forms heme I, the second hydroxylation results in an unstable dihydroxymethyl group, which spontaneously dehydrates, resulting in the formyl group of heme A.</text>
</comment>
<comment type="catalytic activity">
    <reaction evidence="1">
        <text>Fe(II)-heme o + 2 A + H2O = Fe(II)-heme a + 2 AH2</text>
        <dbReference type="Rhea" id="RHEA:63388"/>
        <dbReference type="ChEBI" id="CHEBI:13193"/>
        <dbReference type="ChEBI" id="CHEBI:15377"/>
        <dbReference type="ChEBI" id="CHEBI:17499"/>
        <dbReference type="ChEBI" id="CHEBI:60530"/>
        <dbReference type="ChEBI" id="CHEBI:61715"/>
        <dbReference type="EC" id="1.17.99.9"/>
    </reaction>
    <physiologicalReaction direction="left-to-right" evidence="1">
        <dbReference type="Rhea" id="RHEA:63389"/>
    </physiologicalReaction>
</comment>
<comment type="cofactor">
    <cofactor evidence="1">
        <name>heme b</name>
        <dbReference type="ChEBI" id="CHEBI:60344"/>
    </cofactor>
</comment>
<comment type="pathway">
    <text evidence="2">Porphyrin-containing compound metabolism; heme A biosynthesis; heme A from heme O: step 1/1.</text>
</comment>
<comment type="subcellular location">
    <subcellularLocation>
        <location evidence="2">Mitochondrion inner membrane</location>
        <topology evidence="3">Multi-pass membrane protein</topology>
    </subcellularLocation>
</comment>
<comment type="alternative products">
    <event type="alternative splicing"/>
    <isoform>
        <id>Q8BJ03-1</id>
        <name>1</name>
        <sequence type="displayed"/>
    </isoform>
    <isoform>
        <id>Q8BJ03-2</id>
        <name>2</name>
        <sequence type="described" ref="VSP_011282"/>
    </isoform>
</comment>
<comment type="domain">
    <text evidence="1">The N-half (TM1-TM4) and C-half (TM5-TM8) domains are connected by an intracellular loop. Each domain is formed from four-helix bundles and they align in a pseudo twofold symmetry manner. The N-half domain is the substrate heme O binding domain and the C-half domain is the cofactor heme B binding domain.</text>
</comment>
<comment type="similarity">
    <text evidence="5">Belongs to the COX15/CtaA family. Type 2 subfamily.</text>
</comment>
<comment type="sequence caution" evidence="5">
    <conflict type="erroneous initiation">
        <sequence resource="EMBL-CDS" id="AAH21498"/>
    </conflict>
</comment>
<sequence length="413" mass="45853">MQRLLLPSLRALTGSRNVGLLVPRVASRTQCGSSCGSQRPLRPGQYSTITEVALQSGKGTVSLPSRAAERAVGRWLLVCSGTVAGAVILGGVTRLTESGLSMVDWHLIKEMKPPTSQEEWEAEFQKYQQFPEFKILNHDMTLAEFKFIWYMEYSHRMWGRAVGLAYILPAAYFWRKGWLNRGMKGRVLALCGLVCFQGLLGWYMVKSGLEEKPESYDIPRVSQYRLAAHLGSALVLYCASLWTSLSLLLPQHKLPETRQLLWLRRFAGGTAGLVFLTALSGAFVAGLDAGLVYNSFPKMGESWIPEDLLTFSPVLKNVFENPTMVQFDHRLLGVTSVTAITVLYFLSRRIPLPRRTKMAAVTLLALAYAQVALGISTLLMYVPTPLAATHQSGSLALLSGALWLMNELRRVPK</sequence>
<reference key="1">
    <citation type="journal article" date="2005" name="Science">
        <title>The transcriptional landscape of the mammalian genome.</title>
        <authorList>
            <person name="Carninci P."/>
            <person name="Kasukawa T."/>
            <person name="Katayama S."/>
            <person name="Gough J."/>
            <person name="Frith M.C."/>
            <person name="Maeda N."/>
            <person name="Oyama R."/>
            <person name="Ravasi T."/>
            <person name="Lenhard B."/>
            <person name="Wells C."/>
            <person name="Kodzius R."/>
            <person name="Shimokawa K."/>
            <person name="Bajic V.B."/>
            <person name="Brenner S.E."/>
            <person name="Batalov S."/>
            <person name="Forrest A.R."/>
            <person name="Zavolan M."/>
            <person name="Davis M.J."/>
            <person name="Wilming L.G."/>
            <person name="Aidinis V."/>
            <person name="Allen J.E."/>
            <person name="Ambesi-Impiombato A."/>
            <person name="Apweiler R."/>
            <person name="Aturaliya R.N."/>
            <person name="Bailey T.L."/>
            <person name="Bansal M."/>
            <person name="Baxter L."/>
            <person name="Beisel K.W."/>
            <person name="Bersano T."/>
            <person name="Bono H."/>
            <person name="Chalk A.M."/>
            <person name="Chiu K.P."/>
            <person name="Choudhary V."/>
            <person name="Christoffels A."/>
            <person name="Clutterbuck D.R."/>
            <person name="Crowe M.L."/>
            <person name="Dalla E."/>
            <person name="Dalrymple B.P."/>
            <person name="de Bono B."/>
            <person name="Della Gatta G."/>
            <person name="di Bernardo D."/>
            <person name="Down T."/>
            <person name="Engstrom P."/>
            <person name="Fagiolini M."/>
            <person name="Faulkner G."/>
            <person name="Fletcher C.F."/>
            <person name="Fukushima T."/>
            <person name="Furuno M."/>
            <person name="Futaki S."/>
            <person name="Gariboldi M."/>
            <person name="Georgii-Hemming P."/>
            <person name="Gingeras T.R."/>
            <person name="Gojobori T."/>
            <person name="Green R.E."/>
            <person name="Gustincich S."/>
            <person name="Harbers M."/>
            <person name="Hayashi Y."/>
            <person name="Hensch T.K."/>
            <person name="Hirokawa N."/>
            <person name="Hill D."/>
            <person name="Huminiecki L."/>
            <person name="Iacono M."/>
            <person name="Ikeo K."/>
            <person name="Iwama A."/>
            <person name="Ishikawa T."/>
            <person name="Jakt M."/>
            <person name="Kanapin A."/>
            <person name="Katoh M."/>
            <person name="Kawasawa Y."/>
            <person name="Kelso J."/>
            <person name="Kitamura H."/>
            <person name="Kitano H."/>
            <person name="Kollias G."/>
            <person name="Krishnan S.P."/>
            <person name="Kruger A."/>
            <person name="Kummerfeld S.K."/>
            <person name="Kurochkin I.V."/>
            <person name="Lareau L.F."/>
            <person name="Lazarevic D."/>
            <person name="Lipovich L."/>
            <person name="Liu J."/>
            <person name="Liuni S."/>
            <person name="McWilliam S."/>
            <person name="Madan Babu M."/>
            <person name="Madera M."/>
            <person name="Marchionni L."/>
            <person name="Matsuda H."/>
            <person name="Matsuzawa S."/>
            <person name="Miki H."/>
            <person name="Mignone F."/>
            <person name="Miyake S."/>
            <person name="Morris K."/>
            <person name="Mottagui-Tabar S."/>
            <person name="Mulder N."/>
            <person name="Nakano N."/>
            <person name="Nakauchi H."/>
            <person name="Ng P."/>
            <person name="Nilsson R."/>
            <person name="Nishiguchi S."/>
            <person name="Nishikawa S."/>
            <person name="Nori F."/>
            <person name="Ohara O."/>
            <person name="Okazaki Y."/>
            <person name="Orlando V."/>
            <person name="Pang K.C."/>
            <person name="Pavan W.J."/>
            <person name="Pavesi G."/>
            <person name="Pesole G."/>
            <person name="Petrovsky N."/>
            <person name="Piazza S."/>
            <person name="Reed J."/>
            <person name="Reid J.F."/>
            <person name="Ring B.Z."/>
            <person name="Ringwald M."/>
            <person name="Rost B."/>
            <person name="Ruan Y."/>
            <person name="Salzberg S.L."/>
            <person name="Sandelin A."/>
            <person name="Schneider C."/>
            <person name="Schoenbach C."/>
            <person name="Sekiguchi K."/>
            <person name="Semple C.A."/>
            <person name="Seno S."/>
            <person name="Sessa L."/>
            <person name="Sheng Y."/>
            <person name="Shibata Y."/>
            <person name="Shimada H."/>
            <person name="Shimada K."/>
            <person name="Silva D."/>
            <person name="Sinclair B."/>
            <person name="Sperling S."/>
            <person name="Stupka E."/>
            <person name="Sugiura K."/>
            <person name="Sultana R."/>
            <person name="Takenaka Y."/>
            <person name="Taki K."/>
            <person name="Tammoja K."/>
            <person name="Tan S.L."/>
            <person name="Tang S."/>
            <person name="Taylor M.S."/>
            <person name="Tegner J."/>
            <person name="Teichmann S.A."/>
            <person name="Ueda H.R."/>
            <person name="van Nimwegen E."/>
            <person name="Verardo R."/>
            <person name="Wei C.L."/>
            <person name="Yagi K."/>
            <person name="Yamanishi H."/>
            <person name="Zabarovsky E."/>
            <person name="Zhu S."/>
            <person name="Zimmer A."/>
            <person name="Hide W."/>
            <person name="Bult C."/>
            <person name="Grimmond S.M."/>
            <person name="Teasdale R.D."/>
            <person name="Liu E.T."/>
            <person name="Brusic V."/>
            <person name="Quackenbush J."/>
            <person name="Wahlestedt C."/>
            <person name="Mattick J.S."/>
            <person name="Hume D.A."/>
            <person name="Kai C."/>
            <person name="Sasaki D."/>
            <person name="Tomaru Y."/>
            <person name="Fukuda S."/>
            <person name="Kanamori-Katayama M."/>
            <person name="Suzuki M."/>
            <person name="Aoki J."/>
            <person name="Arakawa T."/>
            <person name="Iida J."/>
            <person name="Imamura K."/>
            <person name="Itoh M."/>
            <person name="Kato T."/>
            <person name="Kawaji H."/>
            <person name="Kawagashira N."/>
            <person name="Kawashima T."/>
            <person name="Kojima M."/>
            <person name="Kondo S."/>
            <person name="Konno H."/>
            <person name="Nakano K."/>
            <person name="Ninomiya N."/>
            <person name="Nishio T."/>
            <person name="Okada M."/>
            <person name="Plessy C."/>
            <person name="Shibata K."/>
            <person name="Shiraki T."/>
            <person name="Suzuki S."/>
            <person name="Tagami M."/>
            <person name="Waki K."/>
            <person name="Watahiki A."/>
            <person name="Okamura-Oho Y."/>
            <person name="Suzuki H."/>
            <person name="Kawai J."/>
            <person name="Hayashizaki Y."/>
        </authorList>
    </citation>
    <scope>NUCLEOTIDE SEQUENCE [LARGE SCALE MRNA] (ISOFORM 1)</scope>
    <source>
        <strain>C57BL/6J</strain>
        <tissue>Head</tissue>
        <tissue>Hippocampus</tissue>
    </source>
</reference>
<reference key="2">
    <citation type="journal article" date="2004" name="Genome Res.">
        <title>The status, quality, and expansion of the NIH full-length cDNA project: the Mammalian Gene Collection (MGC).</title>
        <authorList>
            <consortium name="The MGC Project Team"/>
        </authorList>
    </citation>
    <scope>NUCLEOTIDE SEQUENCE [LARGE SCALE MRNA] (ISOFORMS 1 AND 2)</scope>
    <source>
        <strain>FVB/N</strain>
        <tissue>Mammary tumor</tissue>
    </source>
</reference>
<reference key="3">
    <citation type="journal article" date="2010" name="Cell">
        <title>A tissue-specific atlas of mouse protein phosphorylation and expression.</title>
        <authorList>
            <person name="Huttlin E.L."/>
            <person name="Jedrychowski M.P."/>
            <person name="Elias J.E."/>
            <person name="Goswami T."/>
            <person name="Rad R."/>
            <person name="Beausoleil S.A."/>
            <person name="Villen J."/>
            <person name="Haas W."/>
            <person name="Sowa M.E."/>
            <person name="Gygi S.P."/>
        </authorList>
    </citation>
    <scope>IDENTIFICATION BY MASS SPECTROMETRY [LARGE SCALE ANALYSIS]</scope>
    <source>
        <tissue>Brown adipose tissue</tissue>
        <tissue>Heart</tissue>
        <tissue>Kidney</tissue>
        <tissue>Liver</tissue>
        <tissue>Lung</tissue>
        <tissue>Spleen</tissue>
        <tissue>Testis</tissue>
    </source>
</reference>
<organism>
    <name type="scientific">Mus musculus</name>
    <name type="common">Mouse</name>
    <dbReference type="NCBI Taxonomy" id="10090"/>
    <lineage>
        <taxon>Eukaryota</taxon>
        <taxon>Metazoa</taxon>
        <taxon>Chordata</taxon>
        <taxon>Craniata</taxon>
        <taxon>Vertebrata</taxon>
        <taxon>Euteleostomi</taxon>
        <taxon>Mammalia</taxon>
        <taxon>Eutheria</taxon>
        <taxon>Euarchontoglires</taxon>
        <taxon>Glires</taxon>
        <taxon>Rodentia</taxon>
        <taxon>Myomorpha</taxon>
        <taxon>Muroidea</taxon>
        <taxon>Muridae</taxon>
        <taxon>Murinae</taxon>
        <taxon>Mus</taxon>
        <taxon>Mus</taxon>
    </lineage>
</organism>
<proteinExistence type="evidence at protein level"/>
<name>COX15_MOUSE</name>
<dbReference type="EC" id="1.17.99.9" evidence="2"/>
<dbReference type="EMBL" id="AK048099">
    <property type="protein sequence ID" value="BAC33241.1"/>
    <property type="molecule type" value="mRNA"/>
</dbReference>
<dbReference type="EMBL" id="AK141631">
    <property type="protein sequence ID" value="BAE24776.1"/>
    <property type="molecule type" value="mRNA"/>
</dbReference>
<dbReference type="EMBL" id="BC011509">
    <property type="protein sequence ID" value="AAH11509.1"/>
    <property type="molecule type" value="mRNA"/>
</dbReference>
<dbReference type="EMBL" id="BC021498">
    <property type="protein sequence ID" value="AAH21498.1"/>
    <property type="status" value="ALT_INIT"/>
    <property type="molecule type" value="mRNA"/>
</dbReference>
<dbReference type="CCDS" id="CCDS29836.1">
    <molecule id="Q8BJ03-1"/>
</dbReference>
<dbReference type="RefSeq" id="NP_659123.2">
    <molecule id="Q8BJ03-1"/>
    <property type="nucleotide sequence ID" value="NM_144874.4"/>
</dbReference>
<dbReference type="SMR" id="Q8BJ03"/>
<dbReference type="BioGRID" id="230478">
    <property type="interactions" value="2"/>
</dbReference>
<dbReference type="FunCoup" id="Q8BJ03">
    <property type="interactions" value="3095"/>
</dbReference>
<dbReference type="IntAct" id="Q8BJ03">
    <property type="interactions" value="37"/>
</dbReference>
<dbReference type="STRING" id="10090.ENSMUSP00000041820"/>
<dbReference type="PhosphoSitePlus" id="Q8BJ03"/>
<dbReference type="jPOST" id="Q8BJ03"/>
<dbReference type="PaxDb" id="10090-ENSMUSP00000041820"/>
<dbReference type="PeptideAtlas" id="Q8BJ03"/>
<dbReference type="ProteomicsDB" id="283793">
    <molecule id="Q8BJ03-1"/>
</dbReference>
<dbReference type="ProteomicsDB" id="283794">
    <molecule id="Q8BJ03-2"/>
</dbReference>
<dbReference type="Pumba" id="Q8BJ03"/>
<dbReference type="Antibodypedia" id="17500">
    <property type="antibodies" value="174 antibodies from 28 providers"/>
</dbReference>
<dbReference type="DNASU" id="226139"/>
<dbReference type="Ensembl" id="ENSMUST00000045562.6">
    <molecule id="Q8BJ03-1"/>
    <property type="protein sequence ID" value="ENSMUSP00000041820.6"/>
    <property type="gene ID" value="ENSMUSG00000040018.10"/>
</dbReference>
<dbReference type="GeneID" id="226139"/>
<dbReference type="KEGG" id="mmu:226139"/>
<dbReference type="UCSC" id="uc008hot.2">
    <molecule id="Q8BJ03-1"/>
    <property type="organism name" value="mouse"/>
</dbReference>
<dbReference type="AGR" id="MGI:1920112"/>
<dbReference type="CTD" id="1355"/>
<dbReference type="MGI" id="MGI:1920112">
    <property type="gene designation" value="Cox15"/>
</dbReference>
<dbReference type="VEuPathDB" id="HostDB:ENSMUSG00000040018"/>
<dbReference type="eggNOG" id="KOG2725">
    <property type="taxonomic scope" value="Eukaryota"/>
</dbReference>
<dbReference type="GeneTree" id="ENSGT00390000002223"/>
<dbReference type="HOGENOM" id="CLU_017627_0_1_1"/>
<dbReference type="InParanoid" id="Q8BJ03"/>
<dbReference type="OMA" id="AFVCYSW"/>
<dbReference type="OrthoDB" id="1726137at2759"/>
<dbReference type="PhylomeDB" id="Q8BJ03"/>
<dbReference type="TreeFam" id="TF105073"/>
<dbReference type="Reactome" id="R-MMU-189451">
    <property type="pathway name" value="Heme biosynthesis"/>
</dbReference>
<dbReference type="Reactome" id="R-MMU-9864848">
    <property type="pathway name" value="Complex IV assembly"/>
</dbReference>
<dbReference type="UniPathway" id="UPA00269">
    <property type="reaction ID" value="UER00713"/>
</dbReference>
<dbReference type="BioGRID-ORCS" id="226139">
    <property type="hits" value="18 hits in 79 CRISPR screens"/>
</dbReference>
<dbReference type="ChiTaRS" id="Cox15">
    <property type="organism name" value="mouse"/>
</dbReference>
<dbReference type="PRO" id="PR:Q8BJ03"/>
<dbReference type="Proteomes" id="UP000000589">
    <property type="component" value="Chromosome 19"/>
</dbReference>
<dbReference type="RNAct" id="Q8BJ03">
    <property type="molecule type" value="protein"/>
</dbReference>
<dbReference type="Bgee" id="ENSMUSG00000040018">
    <property type="expression patterns" value="Expressed in epithelium of small intestine and 246 other cell types or tissues"/>
</dbReference>
<dbReference type="GO" id="GO:0070069">
    <property type="term" value="C:cytochrome complex"/>
    <property type="evidence" value="ECO:0007669"/>
    <property type="project" value="Ensembl"/>
</dbReference>
<dbReference type="GO" id="GO:0005743">
    <property type="term" value="C:mitochondrial inner membrane"/>
    <property type="evidence" value="ECO:0007005"/>
    <property type="project" value="MGI"/>
</dbReference>
<dbReference type="GO" id="GO:0005759">
    <property type="term" value="C:mitochondrial matrix"/>
    <property type="evidence" value="ECO:0000266"/>
    <property type="project" value="MGI"/>
</dbReference>
<dbReference type="GO" id="GO:0005739">
    <property type="term" value="C:mitochondrion"/>
    <property type="evidence" value="ECO:0007005"/>
    <property type="project" value="MGI"/>
</dbReference>
<dbReference type="GO" id="GO:0005654">
    <property type="term" value="C:nucleoplasm"/>
    <property type="evidence" value="ECO:0007669"/>
    <property type="project" value="Ensembl"/>
</dbReference>
<dbReference type="GO" id="GO:0046872">
    <property type="term" value="F:metal ion binding"/>
    <property type="evidence" value="ECO:0007669"/>
    <property type="project" value="UniProtKB-KW"/>
</dbReference>
<dbReference type="GO" id="GO:0016653">
    <property type="term" value="F:oxidoreductase activity, acting on NAD(P)H, heme protein as acceptor"/>
    <property type="evidence" value="ECO:0007669"/>
    <property type="project" value="InterPro"/>
</dbReference>
<dbReference type="GO" id="GO:0016627">
    <property type="term" value="F:oxidoreductase activity, acting on the CH-CH group of donors"/>
    <property type="evidence" value="ECO:0000266"/>
    <property type="project" value="MGI"/>
</dbReference>
<dbReference type="GO" id="GO:0017004">
    <property type="term" value="P:cytochrome complex assembly"/>
    <property type="evidence" value="ECO:0007669"/>
    <property type="project" value="Ensembl"/>
</dbReference>
<dbReference type="GO" id="GO:0006784">
    <property type="term" value="P:heme A biosynthetic process"/>
    <property type="evidence" value="ECO:0000266"/>
    <property type="project" value="MGI"/>
</dbReference>
<dbReference type="HAMAP" id="MF_01665">
    <property type="entry name" value="HemeA_synth_type2"/>
    <property type="match status" value="1"/>
</dbReference>
<dbReference type="InterPro" id="IPR003780">
    <property type="entry name" value="COX15/CtaA_fam"/>
</dbReference>
<dbReference type="InterPro" id="IPR023754">
    <property type="entry name" value="HemeA_Synthase_type2"/>
</dbReference>
<dbReference type="InterPro" id="IPR009003">
    <property type="entry name" value="Peptidase_S1_PA"/>
</dbReference>
<dbReference type="PANTHER" id="PTHR23289">
    <property type="entry name" value="CYTOCHROME C OXIDASE ASSEMBLY PROTEIN COX15"/>
    <property type="match status" value="1"/>
</dbReference>
<dbReference type="PANTHER" id="PTHR23289:SF2">
    <property type="entry name" value="CYTOCHROME C OXIDASE ASSEMBLY PROTEIN COX15 HOMOLOG"/>
    <property type="match status" value="1"/>
</dbReference>
<dbReference type="Pfam" id="PF02628">
    <property type="entry name" value="COX15-CtaA"/>
    <property type="match status" value="1"/>
</dbReference>
<dbReference type="SUPFAM" id="SSF50494">
    <property type="entry name" value="Trypsin-like serine proteases"/>
    <property type="match status" value="1"/>
</dbReference>
<evidence type="ECO:0000250" key="1">
    <source>
        <dbReference type="UniProtKB" id="P12946"/>
    </source>
</evidence>
<evidence type="ECO:0000250" key="2">
    <source>
        <dbReference type="UniProtKB" id="P40086"/>
    </source>
</evidence>
<evidence type="ECO:0000255" key="3"/>
<evidence type="ECO:0000303" key="4">
    <source>
    </source>
</evidence>
<evidence type="ECO:0000305" key="5"/>